<sequence length="190" mass="20225">MSGLRPALSTFLFLLLITGGVYPLLTTALGQWWFPWQANGSLIREGDTVRGSALIGQNFTGNGYFHGRPSATAEMPYNPQASGGSNLAVSNPELDKLIAARVAALRAANPDASASVPVELVTASASGLDNNITPQAAAWQIPRVAKARNLSVEQLTQLIAKYSQQPLVNYIGQPVVNIVELNLALDKLDE</sequence>
<dbReference type="EMBL" id="CP000970">
    <property type="protein sequence ID" value="ACB19101.1"/>
    <property type="molecule type" value="Genomic_DNA"/>
</dbReference>
<dbReference type="RefSeq" id="WP_012311911.1">
    <property type="nucleotide sequence ID" value="NC_010498.1"/>
</dbReference>
<dbReference type="SMR" id="B1LLE0"/>
<dbReference type="KEGG" id="ecm:EcSMS35_0718"/>
<dbReference type="HOGENOM" id="CLU_077094_2_0_6"/>
<dbReference type="Proteomes" id="UP000007011">
    <property type="component" value="Chromosome"/>
</dbReference>
<dbReference type="GO" id="GO:0005886">
    <property type="term" value="C:plasma membrane"/>
    <property type="evidence" value="ECO:0007669"/>
    <property type="project" value="UniProtKB-SubCell"/>
</dbReference>
<dbReference type="GO" id="GO:0005524">
    <property type="term" value="F:ATP binding"/>
    <property type="evidence" value="ECO:0007669"/>
    <property type="project" value="UniProtKB-UniRule"/>
</dbReference>
<dbReference type="GO" id="GO:0008556">
    <property type="term" value="F:P-type potassium transmembrane transporter activity"/>
    <property type="evidence" value="ECO:0007669"/>
    <property type="project" value="InterPro"/>
</dbReference>
<dbReference type="HAMAP" id="MF_00276">
    <property type="entry name" value="KdpC"/>
    <property type="match status" value="1"/>
</dbReference>
<dbReference type="InterPro" id="IPR003820">
    <property type="entry name" value="KdpC"/>
</dbReference>
<dbReference type="NCBIfam" id="TIGR00681">
    <property type="entry name" value="kdpC"/>
    <property type="match status" value="1"/>
</dbReference>
<dbReference type="NCBIfam" id="NF001454">
    <property type="entry name" value="PRK00315.1"/>
    <property type="match status" value="1"/>
</dbReference>
<dbReference type="PANTHER" id="PTHR30042">
    <property type="entry name" value="POTASSIUM-TRANSPORTING ATPASE C CHAIN"/>
    <property type="match status" value="1"/>
</dbReference>
<dbReference type="PANTHER" id="PTHR30042:SF2">
    <property type="entry name" value="POTASSIUM-TRANSPORTING ATPASE KDPC SUBUNIT"/>
    <property type="match status" value="1"/>
</dbReference>
<dbReference type="Pfam" id="PF02669">
    <property type="entry name" value="KdpC"/>
    <property type="match status" value="1"/>
</dbReference>
<dbReference type="PIRSF" id="PIRSF001296">
    <property type="entry name" value="K_ATPase_KdpC"/>
    <property type="match status" value="1"/>
</dbReference>
<accession>B1LLE0</accession>
<gene>
    <name evidence="1" type="primary">kdpC</name>
    <name type="ordered locus">EcSMS35_0718</name>
</gene>
<proteinExistence type="inferred from homology"/>
<keyword id="KW-0067">ATP-binding</keyword>
<keyword id="KW-0997">Cell inner membrane</keyword>
<keyword id="KW-1003">Cell membrane</keyword>
<keyword id="KW-0406">Ion transport</keyword>
<keyword id="KW-0472">Membrane</keyword>
<keyword id="KW-0547">Nucleotide-binding</keyword>
<keyword id="KW-0630">Potassium</keyword>
<keyword id="KW-0633">Potassium transport</keyword>
<keyword id="KW-0812">Transmembrane</keyword>
<keyword id="KW-1133">Transmembrane helix</keyword>
<keyword id="KW-0813">Transport</keyword>
<organism>
    <name type="scientific">Escherichia coli (strain SMS-3-5 / SECEC)</name>
    <dbReference type="NCBI Taxonomy" id="439855"/>
    <lineage>
        <taxon>Bacteria</taxon>
        <taxon>Pseudomonadati</taxon>
        <taxon>Pseudomonadota</taxon>
        <taxon>Gammaproteobacteria</taxon>
        <taxon>Enterobacterales</taxon>
        <taxon>Enterobacteriaceae</taxon>
        <taxon>Escherichia</taxon>
    </lineage>
</organism>
<protein>
    <recommendedName>
        <fullName evidence="1">Potassium-transporting ATPase KdpC subunit</fullName>
    </recommendedName>
    <alternativeName>
        <fullName evidence="1">ATP phosphohydrolase [potassium-transporting] C chain</fullName>
    </alternativeName>
    <alternativeName>
        <fullName evidence="1">Potassium-binding and translocating subunit C</fullName>
    </alternativeName>
    <alternativeName>
        <fullName evidence="1">Potassium-translocating ATPase C chain</fullName>
    </alternativeName>
</protein>
<comment type="function">
    <text evidence="1">Part of the high-affinity ATP-driven potassium transport (or Kdp) system, which catalyzes the hydrolysis of ATP coupled with the electrogenic transport of potassium into the cytoplasm. This subunit acts as a catalytic chaperone that increases the ATP-binding affinity of the ATP-hydrolyzing subunit KdpB by the formation of a transient KdpB/KdpC/ATP ternary complex.</text>
</comment>
<comment type="subunit">
    <text evidence="1">The system is composed of three essential subunits: KdpA, KdpB and KdpC.</text>
</comment>
<comment type="subcellular location">
    <subcellularLocation>
        <location evidence="1">Cell inner membrane</location>
        <topology evidence="1">Single-pass membrane protein</topology>
    </subcellularLocation>
</comment>
<comment type="similarity">
    <text evidence="1">Belongs to the KdpC family.</text>
</comment>
<name>KDPC_ECOSM</name>
<evidence type="ECO:0000255" key="1">
    <source>
        <dbReference type="HAMAP-Rule" id="MF_00276"/>
    </source>
</evidence>
<reference key="1">
    <citation type="journal article" date="2008" name="J. Bacteriol.">
        <title>Insights into the environmental resistance gene pool from the genome sequence of the multidrug-resistant environmental isolate Escherichia coli SMS-3-5.</title>
        <authorList>
            <person name="Fricke W.F."/>
            <person name="Wright M.S."/>
            <person name="Lindell A.H."/>
            <person name="Harkins D.M."/>
            <person name="Baker-Austin C."/>
            <person name="Ravel J."/>
            <person name="Stepanauskas R."/>
        </authorList>
    </citation>
    <scope>NUCLEOTIDE SEQUENCE [LARGE SCALE GENOMIC DNA]</scope>
    <source>
        <strain>SMS-3-5 / SECEC</strain>
    </source>
</reference>
<feature type="chain" id="PRO_1000119356" description="Potassium-transporting ATPase KdpC subunit">
    <location>
        <begin position="1"/>
        <end position="190"/>
    </location>
</feature>
<feature type="transmembrane region" description="Helical" evidence="1">
    <location>
        <begin position="10"/>
        <end position="30"/>
    </location>
</feature>